<protein>
    <recommendedName>
        <fullName evidence="5">Mannitol dehydrogenase DSF1</fullName>
        <ecNumber evidence="3">1.1.1.67</ecNumber>
    </recommendedName>
    <alternativeName>
        <fullName evidence="4">Deletion suppressor of MPT5 mutation protein 1</fullName>
    </alternativeName>
</protein>
<reference key="1">
    <citation type="journal article" date="1997" name="Nature">
        <title>The nucleotide sequence of Saccharomyces cerevisiae chromosome V.</title>
        <authorList>
            <person name="Dietrich F.S."/>
            <person name="Mulligan J.T."/>
            <person name="Hennessy K.M."/>
            <person name="Yelton M.A."/>
            <person name="Allen E."/>
            <person name="Araujo R."/>
            <person name="Aviles E."/>
            <person name="Berno A."/>
            <person name="Brennan T."/>
            <person name="Carpenter J."/>
            <person name="Chen E."/>
            <person name="Cherry J.M."/>
            <person name="Chung E."/>
            <person name="Duncan M."/>
            <person name="Guzman E."/>
            <person name="Hartzell G."/>
            <person name="Hunicke-Smith S."/>
            <person name="Hyman R.W."/>
            <person name="Kayser A."/>
            <person name="Komp C."/>
            <person name="Lashkari D."/>
            <person name="Lew H."/>
            <person name="Lin D."/>
            <person name="Mosedale D."/>
            <person name="Nakahara K."/>
            <person name="Namath A."/>
            <person name="Norgren R."/>
            <person name="Oefner P."/>
            <person name="Oh C."/>
            <person name="Petel F.X."/>
            <person name="Roberts D."/>
            <person name="Sehl P."/>
            <person name="Schramm S."/>
            <person name="Shogren T."/>
            <person name="Smith V."/>
            <person name="Taylor P."/>
            <person name="Wei Y."/>
            <person name="Botstein D."/>
            <person name="Davis R.W."/>
        </authorList>
    </citation>
    <scope>NUCLEOTIDE SEQUENCE [LARGE SCALE GENOMIC DNA]</scope>
    <source>
        <strain>ATCC 204508 / S288c</strain>
    </source>
</reference>
<reference key="2">
    <citation type="journal article" date="2014" name="G3 (Bethesda)">
        <title>The reference genome sequence of Saccharomyces cerevisiae: Then and now.</title>
        <authorList>
            <person name="Engel S.R."/>
            <person name="Dietrich F.S."/>
            <person name="Fisk D.G."/>
            <person name="Binkley G."/>
            <person name="Balakrishnan R."/>
            <person name="Costanzo M.C."/>
            <person name="Dwight S.S."/>
            <person name="Hitz B.C."/>
            <person name="Karra K."/>
            <person name="Nash R.S."/>
            <person name="Weng S."/>
            <person name="Wong E.D."/>
            <person name="Lloyd P."/>
            <person name="Skrzypek M.S."/>
            <person name="Miyasato S.R."/>
            <person name="Simison M."/>
            <person name="Cherry J.M."/>
        </authorList>
    </citation>
    <scope>GENOME REANNOTATION</scope>
    <source>
        <strain>ATCC 204508 / S288c</strain>
    </source>
</reference>
<reference key="3">
    <citation type="journal article" date="2003" name="Nature">
        <title>Global analysis of protein expression in yeast.</title>
        <authorList>
            <person name="Ghaemmaghami S."/>
            <person name="Huh W.-K."/>
            <person name="Bower K."/>
            <person name="Howson R.W."/>
            <person name="Belle A."/>
            <person name="Dephoure N."/>
            <person name="O'Shea E.K."/>
            <person name="Weissman J.S."/>
        </authorList>
    </citation>
    <scope>LEVEL OF PROTEIN EXPRESSION [LARGE SCALE ANALYSIS]</scope>
</reference>
<reference key="4">
    <citation type="journal article" date="2006" name="Mol. Genet. Genomics">
        <title>Suppressor analysis of the mpt5/htr1/uth4/puf5 deletion in Saccharomyces cerevisiae.</title>
        <authorList>
            <person name="Ohkuni K."/>
            <person name="Kikuchi Y."/>
            <person name="Hara K."/>
            <person name="Taneda T."/>
            <person name="Hayashi N."/>
            <person name="Kikuchi A."/>
        </authorList>
    </citation>
    <scope>DISRUPTION PHENOTYPE</scope>
</reference>
<reference key="5">
    <citation type="journal article" date="2016" name="Sci. Rep.">
        <title>Hxt13, Hxt15, Hxt16 and Hxt17 from Saccharomyces cerevisiae represent a novel type of polyol transporters.</title>
        <authorList>
            <person name="Jordan P."/>
            <person name="Choe J.Y."/>
            <person name="Boles E."/>
            <person name="Oreb M."/>
        </authorList>
    </citation>
    <scope>FUNCTION</scope>
    <scope>CATALYTIC ACTIVITY</scope>
    <scope>BIOPHYSICOCHEMICAL PROPERTIES</scope>
</reference>
<sequence length="502" mass="56470">MTKSDETTATSLNAKTLKSFESTLPIPTYPREGVKQGIVHLGVGAFHRSHLAVFMHRLMQEHHLKDWSICGVGLMKADALMRDAMKAQDCLYTLVERGIKDTNAYIVGSITAYMYAPDDPRAVIEKMANPDTHIVSLTVTENGYYHSEATNSLMTDAPEIINDLNHPEKPDTLYGYLYEALLLRYKRGLTPFTIMSCDNMPQNGVTVKTMLVAFAKLKKDEKFAAWIEDKVTSPNSMVDRVTPRCTDKERKYVADTWGIKDQCPVVAEPFIQWVLEDNFSDGRPPWELVGVQVVKDVDSYELMKLRLLNGGHSAMGYLGYLAGYTYIHEVVNDPTINKYIRVLMREEVIPLLPKVPGVDFEEYTASVLERFSNPAIQDTVARICLMGSGKMPKYVLPSIYEQLRKPDGKYKLLAVCVAGWFRYLTGVDMNGKPFEIEDPMAPTLKAAAVKGGKDPHELLNIEVLFSPEIRDNKEFVAQLTHSLETVYDKGPIAAIKEILDQV</sequence>
<proteinExistence type="evidence at protein level"/>
<accession>P0CX08</accession>
<accession>D3DLI1</accession>
<accession>P39941</accession>
<evidence type="ECO:0000269" key="1">
    <source>
    </source>
</evidence>
<evidence type="ECO:0000269" key="2">
    <source>
    </source>
</evidence>
<evidence type="ECO:0000269" key="3">
    <source>
    </source>
</evidence>
<evidence type="ECO:0000303" key="4">
    <source>
    </source>
</evidence>
<evidence type="ECO:0000303" key="5">
    <source>
    </source>
</evidence>
<evidence type="ECO:0000305" key="6"/>
<name>DSF1_YEAST</name>
<feature type="chain" id="PRO_0000170751" description="Mannitol dehydrogenase DSF1">
    <location>
        <begin position="1"/>
        <end position="502"/>
    </location>
</feature>
<organism>
    <name type="scientific">Saccharomyces cerevisiae (strain ATCC 204508 / S288c)</name>
    <name type="common">Baker's yeast</name>
    <dbReference type="NCBI Taxonomy" id="559292"/>
    <lineage>
        <taxon>Eukaryota</taxon>
        <taxon>Fungi</taxon>
        <taxon>Dikarya</taxon>
        <taxon>Ascomycota</taxon>
        <taxon>Saccharomycotina</taxon>
        <taxon>Saccharomycetes</taxon>
        <taxon>Saccharomycetales</taxon>
        <taxon>Saccharomycetaceae</taxon>
        <taxon>Saccharomyces</taxon>
    </lineage>
</organism>
<keyword id="KW-0520">NAD</keyword>
<keyword id="KW-0560">Oxidoreductase</keyword>
<keyword id="KW-1185">Reference proteome</keyword>
<dbReference type="EC" id="1.1.1.67" evidence="3"/>
<dbReference type="EMBL" id="U18795">
    <property type="protein sequence ID" value="AAB65017.1"/>
    <property type="molecule type" value="Genomic_DNA"/>
</dbReference>
<dbReference type="EMBL" id="BK006939">
    <property type="protein sequence ID" value="DAA07585.1"/>
    <property type="molecule type" value="Genomic_DNA"/>
</dbReference>
<dbReference type="PIR" id="S50519">
    <property type="entry name" value="S50519"/>
</dbReference>
<dbReference type="RefSeq" id="NP_010844.1">
    <property type="nucleotide sequence ID" value="NM_001178885.1"/>
</dbReference>
<dbReference type="SMR" id="P0CX08"/>
<dbReference type="BioGRID" id="35899">
    <property type="interactions" value="83"/>
</dbReference>
<dbReference type="BioGRID" id="36661">
    <property type="interactions" value="56"/>
</dbReference>
<dbReference type="FunCoup" id="P0CX08">
    <property type="interactions" value="101"/>
</dbReference>
<dbReference type="STRING" id="4932.YEL070W"/>
<dbReference type="iPTMnet" id="P0CX08"/>
<dbReference type="PaxDb" id="4932-YEL070W"/>
<dbReference type="PeptideAtlas" id="P0CX08"/>
<dbReference type="TopDownProteomics" id="P0CX08"/>
<dbReference type="EnsemblFungi" id="YEL070W_mRNA">
    <property type="protein sequence ID" value="YEL070W"/>
    <property type="gene ID" value="YEL070W"/>
</dbReference>
<dbReference type="EnsemblFungi" id="YNR073C_mRNA">
    <property type="protein sequence ID" value="YNR073C"/>
    <property type="gene ID" value="YNR073C"/>
</dbReference>
<dbReference type="GeneID" id="856639"/>
<dbReference type="KEGG" id="sce:YEL070W"/>
<dbReference type="KEGG" id="sce:YNR073C"/>
<dbReference type="AGR" id="SGD:S000000796"/>
<dbReference type="SGD" id="S000000796">
    <property type="gene designation" value="DSF1"/>
</dbReference>
<dbReference type="VEuPathDB" id="FungiDB:YEL070W"/>
<dbReference type="VEuPathDB" id="FungiDB:YNR073C"/>
<dbReference type="eggNOG" id="ENOG502QT30">
    <property type="taxonomic scope" value="Eukaryota"/>
</dbReference>
<dbReference type="HOGENOM" id="CLU_027324_0_1_1"/>
<dbReference type="InParanoid" id="P0CX08"/>
<dbReference type="OMA" id="IVASWAR"/>
<dbReference type="OrthoDB" id="2016955at2759"/>
<dbReference type="BioCyc" id="YEAST:G3O-30185-MONOMER"/>
<dbReference type="BioGRID-ORCS" id="855810">
    <property type="hits" value="0 hits in 10 CRISPR screens"/>
</dbReference>
<dbReference type="PRO" id="PR:P0CX08"/>
<dbReference type="Proteomes" id="UP000002311">
    <property type="component" value="Chromosome V"/>
</dbReference>
<dbReference type="RNAct" id="P0CX08">
    <property type="molecule type" value="protein"/>
</dbReference>
<dbReference type="ExpressionAtlas" id="P0CX08">
    <property type="expression patterns" value="baseline and differential"/>
</dbReference>
<dbReference type="GO" id="GO:0050086">
    <property type="term" value="F:mannitol 2-dehydrogenase activity"/>
    <property type="evidence" value="ECO:0007669"/>
    <property type="project" value="UniProtKB-EC"/>
</dbReference>
<dbReference type="GO" id="GO:0046029">
    <property type="term" value="F:mannitol dehydrogenase activity"/>
    <property type="evidence" value="ECO:0000315"/>
    <property type="project" value="SGD"/>
</dbReference>
<dbReference type="GO" id="GO:0019594">
    <property type="term" value="P:mannitol metabolic process"/>
    <property type="evidence" value="ECO:0007669"/>
    <property type="project" value="InterPro"/>
</dbReference>
<dbReference type="FunFam" id="3.40.50.720:FF:000129">
    <property type="entry name" value="D-mannonate oxidoreductase"/>
    <property type="match status" value="1"/>
</dbReference>
<dbReference type="FunFam" id="1.10.1040.10:FF:000028">
    <property type="entry name" value="Mannitol 2-dehydrogenase"/>
    <property type="match status" value="1"/>
</dbReference>
<dbReference type="Gene3D" id="1.10.1040.10">
    <property type="entry name" value="N-(1-d-carboxylethyl)-l-norvaline Dehydrogenase, domain 2"/>
    <property type="match status" value="1"/>
</dbReference>
<dbReference type="Gene3D" id="3.40.50.720">
    <property type="entry name" value="NAD(P)-binding Rossmann-like Domain"/>
    <property type="match status" value="1"/>
</dbReference>
<dbReference type="InterPro" id="IPR008927">
    <property type="entry name" value="6-PGluconate_DH-like_C_sf"/>
</dbReference>
<dbReference type="InterPro" id="IPR013328">
    <property type="entry name" value="6PGD_dom2"/>
</dbReference>
<dbReference type="InterPro" id="IPR000669">
    <property type="entry name" value="Mannitol_DH"/>
</dbReference>
<dbReference type="InterPro" id="IPR050988">
    <property type="entry name" value="Mannitol_DH/Oxidoreductase"/>
</dbReference>
<dbReference type="InterPro" id="IPR013118">
    <property type="entry name" value="Mannitol_DH_C"/>
</dbReference>
<dbReference type="InterPro" id="IPR023027">
    <property type="entry name" value="Mannitol_DH_CS"/>
</dbReference>
<dbReference type="InterPro" id="IPR013131">
    <property type="entry name" value="Mannitol_DH_N"/>
</dbReference>
<dbReference type="InterPro" id="IPR036291">
    <property type="entry name" value="NAD(P)-bd_dom_sf"/>
</dbReference>
<dbReference type="PANTHER" id="PTHR43362:SF1">
    <property type="entry name" value="MANNITOL DEHYDROGENASE 2-RELATED"/>
    <property type="match status" value="1"/>
</dbReference>
<dbReference type="PANTHER" id="PTHR43362">
    <property type="entry name" value="MANNITOL DEHYDROGENASE DSF1-RELATED"/>
    <property type="match status" value="1"/>
</dbReference>
<dbReference type="Pfam" id="PF01232">
    <property type="entry name" value="Mannitol_dh"/>
    <property type="match status" value="1"/>
</dbReference>
<dbReference type="Pfam" id="PF08125">
    <property type="entry name" value="Mannitol_dh_C"/>
    <property type="match status" value="1"/>
</dbReference>
<dbReference type="PRINTS" id="PR00084">
    <property type="entry name" value="MTLDHDRGNASE"/>
</dbReference>
<dbReference type="SUPFAM" id="SSF48179">
    <property type="entry name" value="6-phosphogluconate dehydrogenase C-terminal domain-like"/>
    <property type="match status" value="1"/>
</dbReference>
<dbReference type="SUPFAM" id="SSF51735">
    <property type="entry name" value="NAD(P)-binding Rossmann-fold domains"/>
    <property type="match status" value="1"/>
</dbReference>
<dbReference type="PROSITE" id="PS00974">
    <property type="entry name" value="MANNITOL_DHGENASE"/>
    <property type="match status" value="1"/>
</dbReference>
<gene>
    <name evidence="4" type="primary">DSF1</name>
    <name evidence="5" type="synonym">MAN1</name>
    <name type="ordered locus">YEL070W</name>
</gene>
<comment type="function">
    <text evidence="3">Catalyzes the NAD(H)-dependent interconversion of D-fructose and D-mannitol in the mannitol metabolic pathway.</text>
</comment>
<comment type="catalytic activity">
    <reaction evidence="3">
        <text>D-mannitol + NAD(+) = D-fructose + NADH + H(+)</text>
        <dbReference type="Rhea" id="RHEA:12084"/>
        <dbReference type="ChEBI" id="CHEBI:15378"/>
        <dbReference type="ChEBI" id="CHEBI:16899"/>
        <dbReference type="ChEBI" id="CHEBI:37721"/>
        <dbReference type="ChEBI" id="CHEBI:57540"/>
        <dbReference type="ChEBI" id="CHEBI:57945"/>
        <dbReference type="EC" id="1.1.1.67"/>
    </reaction>
</comment>
<comment type="biophysicochemical properties">
    <kinetics>
        <KM evidence="3">2.9 mM for mannitol</KM>
        <KM evidence="3">869.6 mM for sorbitol</KM>
        <Vmax evidence="3">0.1 umol/min/mg enzyme toward mannitol</Vmax>
        <Vmax evidence="3">1.5 umol/min/mg enzyme toward sorbitol</Vmax>
    </kinetics>
</comment>
<comment type="disruption phenotype">
    <text evidence="2">Rescues temperature-sensitivity of MPT5 deletion.</text>
</comment>
<comment type="miscellaneous">
    <text>There are two genes for this mannitol dehydrogenase in yeast, DSF1 and YNR073C.</text>
</comment>
<comment type="miscellaneous">
    <text evidence="1">Present with 125 molecules/cell in log phase SD medium.</text>
</comment>
<comment type="similarity">
    <text evidence="6">Belongs to the mannitol dehydrogenase family.</text>
</comment>